<gene>
    <name type="primary">bpoA2</name>
</gene>
<feature type="initiator methionine" description="Removed" evidence="3">
    <location>
        <position position="1"/>
    </location>
</feature>
<feature type="chain" id="PRO_0000207067" description="Non-haem bromoperoxidase BPO-A2">
    <location>
        <begin position="2"/>
        <end position="278"/>
    </location>
</feature>
<feature type="domain" description="AB hydrolase-1" evidence="2">
    <location>
        <begin position="26"/>
        <end position="264"/>
    </location>
</feature>
<feature type="active site" evidence="1">
    <location>
        <position position="99"/>
    </location>
</feature>
<feature type="active site" evidence="1">
    <location>
        <position position="229"/>
    </location>
</feature>
<feature type="active site" evidence="1">
    <location>
        <position position="258"/>
    </location>
</feature>
<feature type="strand" evidence="5">
    <location>
        <begin position="3"/>
        <end position="9"/>
    </location>
</feature>
<feature type="strand" evidence="5">
    <location>
        <begin position="12"/>
        <end position="21"/>
    </location>
</feature>
<feature type="strand" evidence="5">
    <location>
        <begin position="23"/>
        <end position="30"/>
    </location>
</feature>
<feature type="helix" evidence="5">
    <location>
        <begin position="37"/>
        <end position="40"/>
    </location>
</feature>
<feature type="helix" evidence="5">
    <location>
        <begin position="41"/>
        <end position="49"/>
    </location>
</feature>
<feature type="strand" evidence="5">
    <location>
        <begin position="53"/>
        <end position="57"/>
    </location>
</feature>
<feature type="helix" evidence="5">
    <location>
        <begin position="74"/>
        <end position="88"/>
    </location>
</feature>
<feature type="strand" evidence="5">
    <location>
        <begin position="92"/>
        <end position="98"/>
    </location>
</feature>
<feature type="helix" evidence="5">
    <location>
        <begin position="99"/>
        <end position="101"/>
    </location>
</feature>
<feature type="helix" evidence="5">
    <location>
        <begin position="102"/>
        <end position="112"/>
    </location>
</feature>
<feature type="strand" evidence="5">
    <location>
        <begin position="117"/>
        <end position="124"/>
    </location>
</feature>
<feature type="helix" evidence="5">
    <location>
        <begin position="143"/>
        <end position="155"/>
    </location>
</feature>
<feature type="helix" evidence="5">
    <location>
        <begin position="157"/>
        <end position="168"/>
    </location>
</feature>
<feature type="helix" evidence="5">
    <location>
        <begin position="171"/>
        <end position="174"/>
    </location>
</feature>
<feature type="turn" evidence="5">
    <location>
        <begin position="176"/>
        <end position="178"/>
    </location>
</feature>
<feature type="helix" evidence="5">
    <location>
        <begin position="181"/>
        <end position="193"/>
    </location>
</feature>
<feature type="helix" evidence="5">
    <location>
        <begin position="196"/>
        <end position="201"/>
    </location>
</feature>
<feature type="helix" evidence="5">
    <location>
        <begin position="202"/>
        <end position="205"/>
    </location>
</feature>
<feature type="turn" evidence="5">
    <location>
        <begin position="211"/>
        <end position="213"/>
    </location>
</feature>
<feature type="helix" evidence="5">
    <location>
        <begin position="214"/>
        <end position="216"/>
    </location>
</feature>
<feature type="strand" evidence="5">
    <location>
        <begin position="221"/>
        <end position="226"/>
    </location>
</feature>
<feature type="strand" evidence="5">
    <location>
        <begin position="230"/>
        <end position="232"/>
    </location>
</feature>
<feature type="helix" evidence="5">
    <location>
        <begin position="234"/>
        <end position="236"/>
    </location>
</feature>
<feature type="helix" evidence="5">
    <location>
        <begin position="238"/>
        <end position="244"/>
    </location>
</feature>
<feature type="strand" evidence="5">
    <location>
        <begin position="248"/>
        <end position="253"/>
    </location>
</feature>
<feature type="helix" evidence="5">
    <location>
        <begin position="260"/>
        <end position="263"/>
    </location>
</feature>
<feature type="helix" evidence="5">
    <location>
        <begin position="265"/>
        <end position="277"/>
    </location>
</feature>
<organism>
    <name type="scientific">Kitasatospora aureofaciens</name>
    <name type="common">Streptomyces aureofaciens</name>
    <dbReference type="NCBI Taxonomy" id="1894"/>
    <lineage>
        <taxon>Bacteria</taxon>
        <taxon>Bacillati</taxon>
        <taxon>Actinomycetota</taxon>
        <taxon>Actinomycetes</taxon>
        <taxon>Kitasatosporales</taxon>
        <taxon>Streptomycetaceae</taxon>
        <taxon>Kitasatospora</taxon>
    </lineage>
</organism>
<sequence>MPFITVGQENSTSIDLYYEDHGTGQPVVLIHGFPLSGHSWERQSAALLDAGYRVITYDRRGFGQSSQPTTGYDYDTFAADLNTVLETLDLQDAVLVGFSMGTGEVARYVSSYGTARIAKVAFLASLEPFLLKTDDNPDGAAPQEFFDGIVAAVKADRYAFYTGFFNDFYNLDENLGTRISEEAVRNSWNTAASGGFFAAAAAPTTWYTDFRADIPRIDVPALILHGTGDRTLPIENTARVFHKALPSAEYVEVEGAPHGLLWTHAEEVNTALLAFLAK</sequence>
<protein>
    <recommendedName>
        <fullName>Non-haem bromoperoxidase BPO-A2</fullName>
        <ecNumber>1.11.1.-</ecNumber>
    </recommendedName>
    <alternativeName>
        <fullName>BPO2</fullName>
    </alternativeName>
    <alternativeName>
        <fullName>Bromide peroxidase</fullName>
    </alternativeName>
</protein>
<geneLocation type="plasmid">
    <name>pOP2621</name>
</geneLocation>
<accession>P29715</accession>
<dbReference type="EC" id="1.11.1.-"/>
<dbReference type="EMBL" id="M84990">
    <property type="protein sequence ID" value="AAB84315.1"/>
    <property type="molecule type" value="Unassigned_DNA"/>
</dbReference>
<dbReference type="PIR" id="S27614">
    <property type="entry name" value="S27614"/>
</dbReference>
<dbReference type="RefSeq" id="WP_030279028.1">
    <property type="nucleotide sequence ID" value="NZ_BMUB01000001.1"/>
</dbReference>
<dbReference type="PDB" id="1BRO">
    <property type="method" value="X-ray"/>
    <property type="resolution" value="2.05 A"/>
    <property type="chains" value="A/B=2-278"/>
</dbReference>
<dbReference type="PDB" id="1BRT">
    <property type="method" value="X-ray"/>
    <property type="resolution" value="1.50 A"/>
    <property type="chains" value="A=2-278"/>
</dbReference>
<dbReference type="PDB" id="3VDX">
    <property type="method" value="X-ray"/>
    <property type="resolution" value="3.00 A"/>
    <property type="chains" value="A/B/C=1-278"/>
</dbReference>
<dbReference type="PDB" id="4D9J">
    <property type="method" value="X-ray"/>
    <property type="resolution" value="3.92 A"/>
    <property type="chains" value="A/B/C/D/E/F/G/H/I/J/K/L=1-278"/>
</dbReference>
<dbReference type="PDB" id="4IQ4">
    <property type="method" value="X-ray"/>
    <property type="resolution" value="3.50 A"/>
    <property type="chains" value="A/B/C/D/E/F=1-278"/>
</dbReference>
<dbReference type="PDB" id="4ITV">
    <property type="method" value="X-ray"/>
    <property type="resolution" value="3.60 A"/>
    <property type="chains" value="A/B/C/D/E/F/G/H/I/J/K/L=1-278"/>
</dbReference>
<dbReference type="PDB" id="4IVJ">
    <property type="method" value="X-ray"/>
    <property type="resolution" value="7.35 A"/>
    <property type="chains" value="A/B/C=1-278"/>
</dbReference>
<dbReference type="PDB" id="4QES">
    <property type="method" value="X-ray"/>
    <property type="resolution" value="4.19 A"/>
    <property type="chains" value="A/B/C=1-278"/>
</dbReference>
<dbReference type="PDB" id="4QF0">
    <property type="method" value="X-ray"/>
    <property type="resolution" value="6.49 A"/>
    <property type="chains" value="A/B/C/D/E/F=1-278"/>
</dbReference>
<dbReference type="PDB" id="4QFF">
    <property type="method" value="X-ray"/>
    <property type="resolution" value="7.81 A"/>
    <property type="chains" value="A/B/C/D/E/F/G/H/I/J/K/L=1-278"/>
</dbReference>
<dbReference type="PDBsum" id="1BRO"/>
<dbReference type="PDBsum" id="1BRT"/>
<dbReference type="PDBsum" id="3VDX"/>
<dbReference type="PDBsum" id="4D9J"/>
<dbReference type="PDBsum" id="4IQ4"/>
<dbReference type="PDBsum" id="4ITV"/>
<dbReference type="PDBsum" id="4IVJ"/>
<dbReference type="PDBsum" id="4QES"/>
<dbReference type="PDBsum" id="4QF0"/>
<dbReference type="PDBsum" id="4QFF"/>
<dbReference type="SMR" id="P29715"/>
<dbReference type="ESTHER" id="strau-brpa2">
    <property type="family name" value="Haloperoxidase"/>
</dbReference>
<dbReference type="MEROPS" id="S33.991"/>
<dbReference type="PeroxiBase" id="5908">
    <property type="entry name" value="STaHalNPrx02"/>
</dbReference>
<dbReference type="GeneID" id="97483664"/>
<dbReference type="eggNOG" id="COG2267">
    <property type="taxonomic scope" value="Bacteria"/>
</dbReference>
<dbReference type="OrthoDB" id="9785847at2"/>
<dbReference type="BRENDA" id="1.11.1.18">
    <property type="organism ID" value="5978"/>
</dbReference>
<dbReference type="EvolutionaryTrace" id="P29715"/>
<dbReference type="GO" id="GO:0004601">
    <property type="term" value="F:peroxidase activity"/>
    <property type="evidence" value="ECO:0007669"/>
    <property type="project" value="UniProtKB-KW"/>
</dbReference>
<dbReference type="GO" id="GO:0017000">
    <property type="term" value="P:antibiotic biosynthetic process"/>
    <property type="evidence" value="ECO:0007669"/>
    <property type="project" value="UniProtKB-KW"/>
</dbReference>
<dbReference type="FunFam" id="3.40.50.1820:FF:000205">
    <property type="entry name" value="Non-haem bromoperoxidase BPO-A2"/>
    <property type="match status" value="1"/>
</dbReference>
<dbReference type="Gene3D" id="3.40.50.1820">
    <property type="entry name" value="alpha/beta hydrolase"/>
    <property type="match status" value="1"/>
</dbReference>
<dbReference type="InterPro" id="IPR050471">
    <property type="entry name" value="AB_hydrolase"/>
</dbReference>
<dbReference type="InterPro" id="IPR000073">
    <property type="entry name" value="AB_hydrolase_1"/>
</dbReference>
<dbReference type="InterPro" id="IPR029058">
    <property type="entry name" value="AB_hydrolase_fold"/>
</dbReference>
<dbReference type="InterPro" id="IPR000639">
    <property type="entry name" value="Epox_hydrolase-like"/>
</dbReference>
<dbReference type="PANTHER" id="PTHR43433">
    <property type="entry name" value="HYDROLASE, ALPHA/BETA FOLD FAMILY PROTEIN"/>
    <property type="match status" value="1"/>
</dbReference>
<dbReference type="PANTHER" id="PTHR43433:SF4">
    <property type="entry name" value="NON-HEME CHLOROPEROXIDASE-RELATED"/>
    <property type="match status" value="1"/>
</dbReference>
<dbReference type="Pfam" id="PF00561">
    <property type="entry name" value="Abhydrolase_1"/>
    <property type="match status" value="1"/>
</dbReference>
<dbReference type="PRINTS" id="PR00111">
    <property type="entry name" value="ABHYDROLASE"/>
</dbReference>
<dbReference type="PRINTS" id="PR00412">
    <property type="entry name" value="EPOXHYDRLASE"/>
</dbReference>
<dbReference type="SUPFAM" id="SSF53474">
    <property type="entry name" value="alpha/beta-Hydrolases"/>
    <property type="match status" value="1"/>
</dbReference>
<evidence type="ECO:0000250" key="1">
    <source>
        <dbReference type="UniProtKB" id="P22862"/>
    </source>
</evidence>
<evidence type="ECO:0000255" key="2"/>
<evidence type="ECO:0000269" key="3">
    <source>
    </source>
</evidence>
<evidence type="ECO:0000305" key="4"/>
<evidence type="ECO:0007829" key="5">
    <source>
        <dbReference type="PDB" id="1BRT"/>
    </source>
</evidence>
<comment type="function">
    <text>May be a chlorinating enzyme involved in 7-chlorotetracycline biosynthesis.</text>
</comment>
<comment type="subunit">
    <text>Homotrimer.</text>
</comment>
<comment type="similarity">
    <text evidence="4">Belongs to the AB hydrolase superfamily. Bacterial non-heme haloperoxidase / perhydrolase family.</text>
</comment>
<reference key="1">
    <citation type="journal article" date="1992" name="J. Gen. Microbiol.">
        <title>Molecular cloning and sequencing of a non-haem bromoperoxidase gene from Streptomyces aureofaciens ATCC 10762.</title>
        <authorList>
            <person name="Pfeifer O."/>
            <person name="Pelletier I."/>
            <person name="Altenbuchner J."/>
            <person name="van Pee K.-H."/>
        </authorList>
    </citation>
    <scope>NUCLEOTIDE SEQUENCE [GENOMIC DNA]</scope>
    <source>
        <strain>ATCC 10762 / DSM 40127 / CCM 3239 / JCM 4008 / LMG 5968 / NBRC 12843 / NCIMB 8234 / A-377</strain>
    </source>
</reference>
<reference key="2">
    <citation type="journal article" date="1991" name="J. Gen. Microbiol.">
        <title>Purification, characterization and comparison of two non-haem bromoperoxidases from Streptomyces aureofaciens ATCC 10762.</title>
        <authorList>
            <person name="Weng M."/>
            <person name="Pfeifer O."/>
            <person name="Krauss S."/>
            <person name="Lingens F."/>
            <person name="van Pee K.-H."/>
        </authorList>
    </citation>
    <scope>PROTEIN SEQUENCE OF 2-21</scope>
</reference>
<reference key="3">
    <citation type="journal article" date="1994" name="Nat. Struct. Biol.">
        <title>The metal-ion-free oxidoreductase from Streptomyces aureofaciens has an alpha/beta hydrolase fold.</title>
        <authorList>
            <person name="Hecht H.-J."/>
            <person name="Sobek H."/>
            <person name="Haag T."/>
            <person name="Pfeifer O."/>
            <person name="van Pee K.-H."/>
        </authorList>
    </citation>
    <scope>X-RAY CRYSTALLOGRAPHY (2.05 ANGSTROMS)</scope>
    <source>
        <strain>ATCC 10762 / DSM 40127 / CCM 3239 / JCM 4008 / LMG 5968 / NBRC 12843 / NCIMB 8234 / A-377</strain>
    </source>
</reference>
<reference key="4">
    <citation type="journal article" date="1998" name="J. Mol. Biol.">
        <title>Structural investigation of the cofactor-free chloroperoxidases.</title>
        <authorList>
            <person name="Hofmann B."/>
            <person name="Tolzer S."/>
            <person name="Pelletier I."/>
            <person name="Altenbuchner J."/>
            <person name="van Pee K.-H."/>
            <person name="Hecht H.-J."/>
        </authorList>
    </citation>
    <scope>X-RAY CRYSTALLOGRAPHY (1.75 ANGSTROMS)</scope>
    <source>
        <strain>ATCC 10762 / DSM 40127 / CCM 3239 / JCM 4008 / LMG 5968 / NBRC 12843 / NCIMB 8234 / A-377</strain>
    </source>
</reference>
<proteinExistence type="evidence at protein level"/>
<name>BPOA2_KITAU</name>
<keyword id="KW-0002">3D-structure</keyword>
<keyword id="KW-0045">Antibiotic biosynthesis</keyword>
<keyword id="KW-0903">Direct protein sequencing</keyword>
<keyword id="KW-0560">Oxidoreductase</keyword>
<keyword id="KW-0575">Peroxidase</keyword>
<keyword id="KW-0614">Plasmid</keyword>